<evidence type="ECO:0000255" key="1">
    <source>
        <dbReference type="HAMAP-Rule" id="MF_00054"/>
    </source>
</evidence>
<comment type="function">
    <text evidence="1">Catalyzes the GTP-dependent ribosomal translocation step during translation elongation. During this step, the ribosome changes from the pre-translocational (PRE) to the post-translocational (POST) state as the newly formed A-site-bound peptidyl-tRNA and P-site-bound deacylated tRNA move to the P and E sites, respectively. Catalyzes the coordinated movement of the two tRNA molecules, the mRNA and conformational changes in the ribosome.</text>
</comment>
<comment type="subcellular location">
    <subcellularLocation>
        <location evidence="1">Cytoplasm</location>
    </subcellularLocation>
</comment>
<comment type="similarity">
    <text evidence="1">Belongs to the TRAFAC class translation factor GTPase superfamily. Classic translation factor GTPase family. EF-G/EF-2 subfamily.</text>
</comment>
<gene>
    <name evidence="1" type="primary">fusA</name>
    <name type="ordered locus">YPA_3270</name>
</gene>
<accession>Q1C2U0</accession>
<dbReference type="EMBL" id="CP000308">
    <property type="protein sequence ID" value="ABG15232.1"/>
    <property type="molecule type" value="Genomic_DNA"/>
</dbReference>
<dbReference type="RefSeq" id="WP_002212325.1">
    <property type="nucleotide sequence ID" value="NZ_CP009906.1"/>
</dbReference>
<dbReference type="SMR" id="Q1C2U0"/>
<dbReference type="GeneID" id="96663201"/>
<dbReference type="KEGG" id="ypa:YPA_3270"/>
<dbReference type="Proteomes" id="UP000001971">
    <property type="component" value="Chromosome"/>
</dbReference>
<dbReference type="GO" id="GO:0005737">
    <property type="term" value="C:cytoplasm"/>
    <property type="evidence" value="ECO:0007669"/>
    <property type="project" value="UniProtKB-SubCell"/>
</dbReference>
<dbReference type="GO" id="GO:0005525">
    <property type="term" value="F:GTP binding"/>
    <property type="evidence" value="ECO:0007669"/>
    <property type="project" value="UniProtKB-UniRule"/>
</dbReference>
<dbReference type="GO" id="GO:0003924">
    <property type="term" value="F:GTPase activity"/>
    <property type="evidence" value="ECO:0007669"/>
    <property type="project" value="InterPro"/>
</dbReference>
<dbReference type="GO" id="GO:0097216">
    <property type="term" value="F:guanosine tetraphosphate binding"/>
    <property type="evidence" value="ECO:0007669"/>
    <property type="project" value="UniProtKB-ARBA"/>
</dbReference>
<dbReference type="GO" id="GO:0003746">
    <property type="term" value="F:translation elongation factor activity"/>
    <property type="evidence" value="ECO:0007669"/>
    <property type="project" value="UniProtKB-UniRule"/>
</dbReference>
<dbReference type="GO" id="GO:0032790">
    <property type="term" value="P:ribosome disassembly"/>
    <property type="evidence" value="ECO:0007669"/>
    <property type="project" value="TreeGrafter"/>
</dbReference>
<dbReference type="CDD" id="cd01886">
    <property type="entry name" value="EF-G"/>
    <property type="match status" value="1"/>
</dbReference>
<dbReference type="CDD" id="cd16262">
    <property type="entry name" value="EFG_III"/>
    <property type="match status" value="1"/>
</dbReference>
<dbReference type="CDD" id="cd01434">
    <property type="entry name" value="EFG_mtEFG1_IV"/>
    <property type="match status" value="1"/>
</dbReference>
<dbReference type="CDD" id="cd03713">
    <property type="entry name" value="EFG_mtEFG_C"/>
    <property type="match status" value="1"/>
</dbReference>
<dbReference type="CDD" id="cd04088">
    <property type="entry name" value="EFG_mtEFG_II"/>
    <property type="match status" value="1"/>
</dbReference>
<dbReference type="FunFam" id="2.40.30.10:FF:000006">
    <property type="entry name" value="Elongation factor G"/>
    <property type="match status" value="1"/>
</dbReference>
<dbReference type="FunFam" id="3.30.230.10:FF:000003">
    <property type="entry name" value="Elongation factor G"/>
    <property type="match status" value="1"/>
</dbReference>
<dbReference type="FunFam" id="3.30.70.240:FF:000001">
    <property type="entry name" value="Elongation factor G"/>
    <property type="match status" value="1"/>
</dbReference>
<dbReference type="FunFam" id="3.30.70.870:FF:000001">
    <property type="entry name" value="Elongation factor G"/>
    <property type="match status" value="1"/>
</dbReference>
<dbReference type="FunFam" id="3.40.50.300:FF:000029">
    <property type="entry name" value="Elongation factor G"/>
    <property type="match status" value="1"/>
</dbReference>
<dbReference type="Gene3D" id="3.30.230.10">
    <property type="match status" value="1"/>
</dbReference>
<dbReference type="Gene3D" id="3.30.70.240">
    <property type="match status" value="1"/>
</dbReference>
<dbReference type="Gene3D" id="3.30.70.870">
    <property type="entry name" value="Elongation Factor G (Translational Gtpase), domain 3"/>
    <property type="match status" value="1"/>
</dbReference>
<dbReference type="Gene3D" id="3.40.50.300">
    <property type="entry name" value="P-loop containing nucleotide triphosphate hydrolases"/>
    <property type="match status" value="1"/>
</dbReference>
<dbReference type="Gene3D" id="2.40.30.10">
    <property type="entry name" value="Translation factors"/>
    <property type="match status" value="1"/>
</dbReference>
<dbReference type="HAMAP" id="MF_00054_B">
    <property type="entry name" value="EF_G_EF_2_B"/>
    <property type="match status" value="1"/>
</dbReference>
<dbReference type="InterPro" id="IPR041095">
    <property type="entry name" value="EFG_II"/>
</dbReference>
<dbReference type="InterPro" id="IPR009022">
    <property type="entry name" value="EFG_III"/>
</dbReference>
<dbReference type="InterPro" id="IPR035647">
    <property type="entry name" value="EFG_III/V"/>
</dbReference>
<dbReference type="InterPro" id="IPR047872">
    <property type="entry name" value="EFG_IV"/>
</dbReference>
<dbReference type="InterPro" id="IPR035649">
    <property type="entry name" value="EFG_V"/>
</dbReference>
<dbReference type="InterPro" id="IPR000640">
    <property type="entry name" value="EFG_V-like"/>
</dbReference>
<dbReference type="InterPro" id="IPR004161">
    <property type="entry name" value="EFTu-like_2"/>
</dbReference>
<dbReference type="InterPro" id="IPR031157">
    <property type="entry name" value="G_TR_CS"/>
</dbReference>
<dbReference type="InterPro" id="IPR027417">
    <property type="entry name" value="P-loop_NTPase"/>
</dbReference>
<dbReference type="InterPro" id="IPR020568">
    <property type="entry name" value="Ribosomal_Su5_D2-typ_SF"/>
</dbReference>
<dbReference type="InterPro" id="IPR014721">
    <property type="entry name" value="Ribsml_uS5_D2-typ_fold_subgr"/>
</dbReference>
<dbReference type="InterPro" id="IPR005225">
    <property type="entry name" value="Small_GTP-bd"/>
</dbReference>
<dbReference type="InterPro" id="IPR000795">
    <property type="entry name" value="T_Tr_GTP-bd_dom"/>
</dbReference>
<dbReference type="InterPro" id="IPR009000">
    <property type="entry name" value="Transl_B-barrel_sf"/>
</dbReference>
<dbReference type="InterPro" id="IPR004540">
    <property type="entry name" value="Transl_elong_EFG/EF2"/>
</dbReference>
<dbReference type="InterPro" id="IPR005517">
    <property type="entry name" value="Transl_elong_EFG/EF2_IV"/>
</dbReference>
<dbReference type="NCBIfam" id="TIGR00484">
    <property type="entry name" value="EF-G"/>
    <property type="match status" value="1"/>
</dbReference>
<dbReference type="NCBIfam" id="NF009381">
    <property type="entry name" value="PRK12740.1-5"/>
    <property type="match status" value="1"/>
</dbReference>
<dbReference type="NCBIfam" id="TIGR00231">
    <property type="entry name" value="small_GTP"/>
    <property type="match status" value="1"/>
</dbReference>
<dbReference type="PANTHER" id="PTHR43261:SF1">
    <property type="entry name" value="RIBOSOME-RELEASING FACTOR 2, MITOCHONDRIAL"/>
    <property type="match status" value="1"/>
</dbReference>
<dbReference type="PANTHER" id="PTHR43261">
    <property type="entry name" value="TRANSLATION ELONGATION FACTOR G-RELATED"/>
    <property type="match status" value="1"/>
</dbReference>
<dbReference type="Pfam" id="PF00679">
    <property type="entry name" value="EFG_C"/>
    <property type="match status" value="1"/>
</dbReference>
<dbReference type="Pfam" id="PF14492">
    <property type="entry name" value="EFG_III"/>
    <property type="match status" value="1"/>
</dbReference>
<dbReference type="Pfam" id="PF03764">
    <property type="entry name" value="EFG_IV"/>
    <property type="match status" value="1"/>
</dbReference>
<dbReference type="Pfam" id="PF00009">
    <property type="entry name" value="GTP_EFTU"/>
    <property type="match status" value="1"/>
</dbReference>
<dbReference type="Pfam" id="PF03144">
    <property type="entry name" value="GTP_EFTU_D2"/>
    <property type="match status" value="1"/>
</dbReference>
<dbReference type="PRINTS" id="PR00315">
    <property type="entry name" value="ELONGATNFCT"/>
</dbReference>
<dbReference type="SMART" id="SM00838">
    <property type="entry name" value="EFG_C"/>
    <property type="match status" value="1"/>
</dbReference>
<dbReference type="SMART" id="SM00889">
    <property type="entry name" value="EFG_IV"/>
    <property type="match status" value="1"/>
</dbReference>
<dbReference type="SUPFAM" id="SSF54980">
    <property type="entry name" value="EF-G C-terminal domain-like"/>
    <property type="match status" value="2"/>
</dbReference>
<dbReference type="SUPFAM" id="SSF52540">
    <property type="entry name" value="P-loop containing nucleoside triphosphate hydrolases"/>
    <property type="match status" value="1"/>
</dbReference>
<dbReference type="SUPFAM" id="SSF54211">
    <property type="entry name" value="Ribosomal protein S5 domain 2-like"/>
    <property type="match status" value="1"/>
</dbReference>
<dbReference type="SUPFAM" id="SSF50447">
    <property type="entry name" value="Translation proteins"/>
    <property type="match status" value="1"/>
</dbReference>
<dbReference type="PROSITE" id="PS00301">
    <property type="entry name" value="G_TR_1"/>
    <property type="match status" value="1"/>
</dbReference>
<dbReference type="PROSITE" id="PS51722">
    <property type="entry name" value="G_TR_2"/>
    <property type="match status" value="1"/>
</dbReference>
<sequence length="702" mass="77537">MARKTPIERYRNIGISAHIDAGKTTTTERILFYTGVNHKIGEVHDGAATMDWMEQEQERGITITSAATTCFWSGMAKQFEPHHVNIIDTPGHVDFTIEVERSMRVLDGAVMVYCAVGGVQPQSETVWRQANKYKVPRIAFVNKMDRMGANFLRVVGQLKSRLGANPVPLQLAIGAEEKFTGIIDLVKMKAINWNEADQGVTFEYEEIPADMAELAAEWHQNLVESAAEASDELMDKYLGGEELTEEEIKKALRQRVLKSEIILVTCGSAFKNKGVQAMLDAVIEYLPAPTDVESINGILDDGKDTPAVRHSDDKEPFSALAFKIATDPFVGNLTFFRVYSGIVNSGDTVLNSVKSQRERLGRIVQMHANKREEIKEVHAGDIAAAIGLKDVTTGDTLCDPNNPIILERMEFPEPVISVAVEPKTKADQEKMGMALGRLAKEDPSFRVWTDEESGQTIIAGMGELHLDILVDRMRREFNVEANVGKPQVAYRETIRETVKDVEGKHAKQSGGRGQYGHVVIDMSPLPPGGVGYEFVNEIVGGSIPKEFIPAVDKGIQEQLKSGPLAGYPVVDVKVRLHYGSYHDVDSSELAFKLAGSIAFKEGFKRAKPVLLEPIMKVEVETPEDYMGDVMGDLNRRRGIIEGMEDTATGKTVRVKVPLSEMFGYATDLRSQTQGRASYSMEFLEYAEAPSNVAKAVIEARGK</sequence>
<organism>
    <name type="scientific">Yersinia pestis bv. Antiqua (strain Antiqua)</name>
    <dbReference type="NCBI Taxonomy" id="360102"/>
    <lineage>
        <taxon>Bacteria</taxon>
        <taxon>Pseudomonadati</taxon>
        <taxon>Pseudomonadota</taxon>
        <taxon>Gammaproteobacteria</taxon>
        <taxon>Enterobacterales</taxon>
        <taxon>Yersiniaceae</taxon>
        <taxon>Yersinia</taxon>
    </lineage>
</organism>
<name>EFG_YERPA</name>
<protein>
    <recommendedName>
        <fullName evidence="1">Elongation factor G</fullName>
        <shortName evidence="1">EF-G</shortName>
    </recommendedName>
</protein>
<proteinExistence type="inferred from homology"/>
<feature type="chain" id="PRO_0000263535" description="Elongation factor G">
    <location>
        <begin position="1"/>
        <end position="702"/>
    </location>
</feature>
<feature type="domain" description="tr-type G">
    <location>
        <begin position="8"/>
        <end position="290"/>
    </location>
</feature>
<feature type="binding site" evidence="1">
    <location>
        <begin position="17"/>
        <end position="24"/>
    </location>
    <ligand>
        <name>GTP</name>
        <dbReference type="ChEBI" id="CHEBI:37565"/>
    </ligand>
</feature>
<feature type="binding site" evidence="1">
    <location>
        <begin position="88"/>
        <end position="92"/>
    </location>
    <ligand>
        <name>GTP</name>
        <dbReference type="ChEBI" id="CHEBI:37565"/>
    </ligand>
</feature>
<feature type="binding site" evidence="1">
    <location>
        <begin position="142"/>
        <end position="145"/>
    </location>
    <ligand>
        <name>GTP</name>
        <dbReference type="ChEBI" id="CHEBI:37565"/>
    </ligand>
</feature>
<reference key="1">
    <citation type="journal article" date="2006" name="J. Bacteriol.">
        <title>Complete genome sequence of Yersinia pestis strains Antiqua and Nepal516: evidence of gene reduction in an emerging pathogen.</title>
        <authorList>
            <person name="Chain P.S.G."/>
            <person name="Hu P."/>
            <person name="Malfatti S.A."/>
            <person name="Radnedge L."/>
            <person name="Larimer F."/>
            <person name="Vergez L.M."/>
            <person name="Worsham P."/>
            <person name="Chu M.C."/>
            <person name="Andersen G.L."/>
        </authorList>
    </citation>
    <scope>NUCLEOTIDE SEQUENCE [LARGE SCALE GENOMIC DNA]</scope>
    <source>
        <strain>Antiqua</strain>
    </source>
</reference>
<keyword id="KW-0963">Cytoplasm</keyword>
<keyword id="KW-0251">Elongation factor</keyword>
<keyword id="KW-0342">GTP-binding</keyword>
<keyword id="KW-0547">Nucleotide-binding</keyword>
<keyword id="KW-0648">Protein biosynthesis</keyword>